<keyword id="KW-0067">ATP-binding</keyword>
<keyword id="KW-0963">Cytoplasm</keyword>
<keyword id="KW-0418">Kinase</keyword>
<keyword id="KW-0547">Nucleotide-binding</keyword>
<keyword id="KW-0808">Transferase</keyword>
<organism>
    <name type="scientific">Polynucleobacter necessarius subsp. necessarius (strain STIR1)</name>
    <dbReference type="NCBI Taxonomy" id="452638"/>
    <lineage>
        <taxon>Bacteria</taxon>
        <taxon>Pseudomonadati</taxon>
        <taxon>Pseudomonadota</taxon>
        <taxon>Betaproteobacteria</taxon>
        <taxon>Burkholderiales</taxon>
        <taxon>Burkholderiaceae</taxon>
        <taxon>Polynucleobacter</taxon>
    </lineage>
</organism>
<gene>
    <name evidence="1" type="primary">cmk</name>
    <name type="ordered locus">Pnec_1309</name>
</gene>
<name>KCY_POLNS</name>
<sequence>MSLPPVIAIDGPTASGKGTVASLVAEKLGFHYLDSGALYRLVALASEKQGIDVKNGQELGLLVPKLLISFKNSQIFLNGENVTDAIRVESIGLRASALAVHPEIRSALVGLQRSFRQSPGLVADGRDTASVIFPDAILKVFLTATAAARAGRRYKQLIAKGISAKLEDLLQDLQERDARDSSRGVAPLLVADGAKVLETSDLSIDQAVKTVLDWY</sequence>
<dbReference type="EC" id="2.7.4.25" evidence="1"/>
<dbReference type="EMBL" id="CP001010">
    <property type="protein sequence ID" value="ACB44429.1"/>
    <property type="molecule type" value="Genomic_DNA"/>
</dbReference>
<dbReference type="SMR" id="B1XVQ2"/>
<dbReference type="STRING" id="452638.Pnec_1309"/>
<dbReference type="KEGG" id="pne:Pnec_1309"/>
<dbReference type="eggNOG" id="COG0283">
    <property type="taxonomic scope" value="Bacteria"/>
</dbReference>
<dbReference type="HOGENOM" id="CLU_079959_2_0_4"/>
<dbReference type="OrthoDB" id="9807434at2"/>
<dbReference type="GO" id="GO:0005737">
    <property type="term" value="C:cytoplasm"/>
    <property type="evidence" value="ECO:0007669"/>
    <property type="project" value="UniProtKB-SubCell"/>
</dbReference>
<dbReference type="GO" id="GO:0005524">
    <property type="term" value="F:ATP binding"/>
    <property type="evidence" value="ECO:0007669"/>
    <property type="project" value="UniProtKB-UniRule"/>
</dbReference>
<dbReference type="GO" id="GO:0036430">
    <property type="term" value="F:CMP kinase activity"/>
    <property type="evidence" value="ECO:0007669"/>
    <property type="project" value="RHEA"/>
</dbReference>
<dbReference type="GO" id="GO:0036431">
    <property type="term" value="F:dCMP kinase activity"/>
    <property type="evidence" value="ECO:0007669"/>
    <property type="project" value="RHEA"/>
</dbReference>
<dbReference type="GO" id="GO:0006220">
    <property type="term" value="P:pyrimidine nucleotide metabolic process"/>
    <property type="evidence" value="ECO:0007669"/>
    <property type="project" value="UniProtKB-UniRule"/>
</dbReference>
<dbReference type="CDD" id="cd02020">
    <property type="entry name" value="CMPK"/>
    <property type="match status" value="1"/>
</dbReference>
<dbReference type="Gene3D" id="3.40.50.300">
    <property type="entry name" value="P-loop containing nucleotide triphosphate hydrolases"/>
    <property type="match status" value="1"/>
</dbReference>
<dbReference type="HAMAP" id="MF_00238">
    <property type="entry name" value="Cytidyl_kinase_type1"/>
    <property type="match status" value="1"/>
</dbReference>
<dbReference type="InterPro" id="IPR003136">
    <property type="entry name" value="Cytidylate_kin"/>
</dbReference>
<dbReference type="InterPro" id="IPR011994">
    <property type="entry name" value="Cytidylate_kinase_dom"/>
</dbReference>
<dbReference type="InterPro" id="IPR027417">
    <property type="entry name" value="P-loop_NTPase"/>
</dbReference>
<dbReference type="NCBIfam" id="TIGR00017">
    <property type="entry name" value="cmk"/>
    <property type="match status" value="1"/>
</dbReference>
<dbReference type="Pfam" id="PF02224">
    <property type="entry name" value="Cytidylate_kin"/>
    <property type="match status" value="1"/>
</dbReference>
<dbReference type="SUPFAM" id="SSF52540">
    <property type="entry name" value="P-loop containing nucleoside triphosphate hydrolases"/>
    <property type="match status" value="1"/>
</dbReference>
<proteinExistence type="inferred from homology"/>
<protein>
    <recommendedName>
        <fullName evidence="1">Cytidylate kinase</fullName>
        <shortName evidence="1">CK</shortName>
        <ecNumber evidence="1">2.7.4.25</ecNumber>
    </recommendedName>
    <alternativeName>
        <fullName evidence="1">Cytidine monophosphate kinase</fullName>
        <shortName evidence="1">CMP kinase</shortName>
    </alternativeName>
</protein>
<evidence type="ECO:0000255" key="1">
    <source>
        <dbReference type="HAMAP-Rule" id="MF_00238"/>
    </source>
</evidence>
<reference key="1">
    <citation type="journal article" date="2013" name="Proc. Natl. Acad. Sci. U.S.A.">
        <title>Polynucleobacter necessarius, a model for genome reduction in both free-living and symbiotic bacteria.</title>
        <authorList>
            <person name="Boscaro V."/>
            <person name="Felletti M."/>
            <person name="Vannini C."/>
            <person name="Ackerman M.S."/>
            <person name="Chain P.S."/>
            <person name="Malfatti S."/>
            <person name="Vergez L.M."/>
            <person name="Shin M."/>
            <person name="Doak T.G."/>
            <person name="Lynch M."/>
            <person name="Petroni G."/>
        </authorList>
    </citation>
    <scope>NUCLEOTIDE SEQUENCE [LARGE SCALE GENOMIC DNA]</scope>
    <source>
        <strain>STIR1</strain>
    </source>
</reference>
<accession>B1XVQ2</accession>
<comment type="catalytic activity">
    <reaction evidence="1">
        <text>CMP + ATP = CDP + ADP</text>
        <dbReference type="Rhea" id="RHEA:11600"/>
        <dbReference type="ChEBI" id="CHEBI:30616"/>
        <dbReference type="ChEBI" id="CHEBI:58069"/>
        <dbReference type="ChEBI" id="CHEBI:60377"/>
        <dbReference type="ChEBI" id="CHEBI:456216"/>
        <dbReference type="EC" id="2.7.4.25"/>
    </reaction>
</comment>
<comment type="catalytic activity">
    <reaction evidence="1">
        <text>dCMP + ATP = dCDP + ADP</text>
        <dbReference type="Rhea" id="RHEA:25094"/>
        <dbReference type="ChEBI" id="CHEBI:30616"/>
        <dbReference type="ChEBI" id="CHEBI:57566"/>
        <dbReference type="ChEBI" id="CHEBI:58593"/>
        <dbReference type="ChEBI" id="CHEBI:456216"/>
        <dbReference type="EC" id="2.7.4.25"/>
    </reaction>
</comment>
<comment type="subcellular location">
    <subcellularLocation>
        <location evidence="1">Cytoplasm</location>
    </subcellularLocation>
</comment>
<comment type="similarity">
    <text evidence="1">Belongs to the cytidylate kinase family. Type 1 subfamily.</text>
</comment>
<feature type="chain" id="PRO_1000100672" description="Cytidylate kinase">
    <location>
        <begin position="1"/>
        <end position="215"/>
    </location>
</feature>
<feature type="binding site" evidence="1">
    <location>
        <begin position="11"/>
        <end position="19"/>
    </location>
    <ligand>
        <name>ATP</name>
        <dbReference type="ChEBI" id="CHEBI:30616"/>
    </ligand>
</feature>